<reference key="1">
    <citation type="journal article" date="2009" name="Proc. Natl. Acad. Sci. U.S.A.">
        <title>The genomic basis of trophic strategy in marine bacteria.</title>
        <authorList>
            <person name="Lauro F.M."/>
            <person name="McDougald D."/>
            <person name="Thomas T."/>
            <person name="Williams T.J."/>
            <person name="Egan S."/>
            <person name="Rice S."/>
            <person name="DeMaere M.Z."/>
            <person name="Ting L."/>
            <person name="Ertan H."/>
            <person name="Johnson J."/>
            <person name="Ferriera S."/>
            <person name="Lapidus A."/>
            <person name="Anderson I."/>
            <person name="Kyrpides N."/>
            <person name="Munk A.C."/>
            <person name="Detter C."/>
            <person name="Han C.S."/>
            <person name="Brown M.V."/>
            <person name="Robb F.T."/>
            <person name="Kjelleberg S."/>
            <person name="Cavicchioli R."/>
        </authorList>
    </citation>
    <scope>NUCLEOTIDE SEQUENCE [LARGE SCALE GENOMIC DNA]</scope>
    <source>
        <strain>DSM 13593 / LMG 18877 / RB2256</strain>
    </source>
</reference>
<evidence type="ECO:0000255" key="1">
    <source>
        <dbReference type="HAMAP-Rule" id="MF_01331"/>
    </source>
</evidence>
<evidence type="ECO:0000305" key="2"/>
<organism>
    <name type="scientific">Sphingopyxis alaskensis (strain DSM 13593 / LMG 18877 / RB2256)</name>
    <name type="common">Sphingomonas alaskensis</name>
    <dbReference type="NCBI Taxonomy" id="317655"/>
    <lineage>
        <taxon>Bacteria</taxon>
        <taxon>Pseudomonadati</taxon>
        <taxon>Pseudomonadota</taxon>
        <taxon>Alphaproteobacteria</taxon>
        <taxon>Sphingomonadales</taxon>
        <taxon>Sphingomonadaceae</taxon>
        <taxon>Sphingopyxis</taxon>
    </lineage>
</organism>
<dbReference type="EMBL" id="CP000356">
    <property type="protein sequence ID" value="ABF54518.1"/>
    <property type="molecule type" value="Genomic_DNA"/>
</dbReference>
<dbReference type="RefSeq" id="WP_011543083.1">
    <property type="nucleotide sequence ID" value="NC_008048.1"/>
</dbReference>
<dbReference type="SMR" id="Q1GPA4"/>
<dbReference type="STRING" id="317655.Sala_2813"/>
<dbReference type="KEGG" id="sal:Sala_2813"/>
<dbReference type="eggNOG" id="COG0091">
    <property type="taxonomic scope" value="Bacteria"/>
</dbReference>
<dbReference type="HOGENOM" id="CLU_083987_3_0_5"/>
<dbReference type="OrthoDB" id="9805969at2"/>
<dbReference type="Proteomes" id="UP000006578">
    <property type="component" value="Chromosome"/>
</dbReference>
<dbReference type="GO" id="GO:0022625">
    <property type="term" value="C:cytosolic large ribosomal subunit"/>
    <property type="evidence" value="ECO:0007669"/>
    <property type="project" value="TreeGrafter"/>
</dbReference>
<dbReference type="GO" id="GO:0019843">
    <property type="term" value="F:rRNA binding"/>
    <property type="evidence" value="ECO:0007669"/>
    <property type="project" value="UniProtKB-UniRule"/>
</dbReference>
<dbReference type="GO" id="GO:0003735">
    <property type="term" value="F:structural constituent of ribosome"/>
    <property type="evidence" value="ECO:0007669"/>
    <property type="project" value="InterPro"/>
</dbReference>
<dbReference type="GO" id="GO:0006412">
    <property type="term" value="P:translation"/>
    <property type="evidence" value="ECO:0007669"/>
    <property type="project" value="UniProtKB-UniRule"/>
</dbReference>
<dbReference type="CDD" id="cd00336">
    <property type="entry name" value="Ribosomal_L22"/>
    <property type="match status" value="1"/>
</dbReference>
<dbReference type="Gene3D" id="3.90.470.10">
    <property type="entry name" value="Ribosomal protein L22/L17"/>
    <property type="match status" value="1"/>
</dbReference>
<dbReference type="HAMAP" id="MF_01331_B">
    <property type="entry name" value="Ribosomal_uL22_B"/>
    <property type="match status" value="1"/>
</dbReference>
<dbReference type="InterPro" id="IPR001063">
    <property type="entry name" value="Ribosomal_uL22"/>
</dbReference>
<dbReference type="InterPro" id="IPR005727">
    <property type="entry name" value="Ribosomal_uL22_bac/chlpt-type"/>
</dbReference>
<dbReference type="InterPro" id="IPR047867">
    <property type="entry name" value="Ribosomal_uL22_bac/org-type"/>
</dbReference>
<dbReference type="InterPro" id="IPR036394">
    <property type="entry name" value="Ribosomal_uL22_sf"/>
</dbReference>
<dbReference type="NCBIfam" id="TIGR01044">
    <property type="entry name" value="rplV_bact"/>
    <property type="match status" value="1"/>
</dbReference>
<dbReference type="PANTHER" id="PTHR13501">
    <property type="entry name" value="CHLOROPLAST 50S RIBOSOMAL PROTEIN L22-RELATED"/>
    <property type="match status" value="1"/>
</dbReference>
<dbReference type="PANTHER" id="PTHR13501:SF8">
    <property type="entry name" value="LARGE RIBOSOMAL SUBUNIT PROTEIN UL22M"/>
    <property type="match status" value="1"/>
</dbReference>
<dbReference type="Pfam" id="PF00237">
    <property type="entry name" value="Ribosomal_L22"/>
    <property type="match status" value="1"/>
</dbReference>
<dbReference type="SUPFAM" id="SSF54843">
    <property type="entry name" value="Ribosomal protein L22"/>
    <property type="match status" value="1"/>
</dbReference>
<protein>
    <recommendedName>
        <fullName evidence="1">Large ribosomal subunit protein uL22</fullName>
    </recommendedName>
    <alternativeName>
        <fullName evidence="2">50S ribosomal protein L22</fullName>
    </alternativeName>
</protein>
<comment type="function">
    <text evidence="1">This protein binds specifically to 23S rRNA; its binding is stimulated by other ribosomal proteins, e.g. L4, L17, and L20. It is important during the early stages of 50S assembly. It makes multiple contacts with different domains of the 23S rRNA in the assembled 50S subunit and ribosome (By similarity).</text>
</comment>
<comment type="function">
    <text evidence="1">The globular domain of the protein is located near the polypeptide exit tunnel on the outside of the subunit, while an extended beta-hairpin is found that lines the wall of the exit tunnel in the center of the 70S ribosome.</text>
</comment>
<comment type="subunit">
    <text evidence="1">Part of the 50S ribosomal subunit.</text>
</comment>
<comment type="similarity">
    <text evidence="1">Belongs to the universal ribosomal protein uL22 family.</text>
</comment>
<sequence length="126" mass="13832">MGKEKSPRRVADNEALSVGTQIRGSAQKLNLVAALIRGRKVEDAMNVLAFSKKAMAVDVRKVLASAVANAENNHNLDVDALVVKEASVGKSLSMKRWHARGRGKSTRIVKPFSRIRIVVREQEEEA</sequence>
<proteinExistence type="inferred from homology"/>
<keyword id="KW-1185">Reference proteome</keyword>
<keyword id="KW-0687">Ribonucleoprotein</keyword>
<keyword id="KW-0689">Ribosomal protein</keyword>
<keyword id="KW-0694">RNA-binding</keyword>
<keyword id="KW-0699">rRNA-binding</keyword>
<accession>Q1GPA4</accession>
<name>RL22_SPHAL</name>
<feature type="chain" id="PRO_0000354520" description="Large ribosomal subunit protein uL22">
    <location>
        <begin position="1"/>
        <end position="126"/>
    </location>
</feature>
<gene>
    <name evidence="1" type="primary">rplV</name>
    <name type="ordered locus">Sala_2813</name>
</gene>